<proteinExistence type="evidence at transcript level"/>
<dbReference type="EMBL" id="X56750">
    <property type="protein sequence ID" value="CAA40071.1"/>
    <property type="molecule type" value="mRNA"/>
</dbReference>
<dbReference type="EMBL" id="X58428">
    <property type="protein sequence ID" value="CAA41330.1"/>
    <property type="molecule type" value="mRNA"/>
</dbReference>
<dbReference type="EMBL" id="AB041935">
    <property type="protein sequence ID" value="BAB16110.1"/>
    <property type="molecule type" value="Genomic_DNA"/>
</dbReference>
<dbReference type="EMBL" id="AY294018">
    <property type="protein sequence ID" value="AAP72169.1"/>
    <property type="molecule type" value="mRNA"/>
</dbReference>
<dbReference type="PIR" id="S16241">
    <property type="entry name" value="S16241"/>
</dbReference>
<dbReference type="RefSeq" id="NP_999026.1">
    <property type="nucleotide sequence ID" value="NM_213861.1"/>
</dbReference>
<dbReference type="SMR" id="P26891"/>
<dbReference type="FunCoup" id="P26891">
    <property type="interactions" value="209"/>
</dbReference>
<dbReference type="STRING" id="9823.ENSSSCP00000059176"/>
<dbReference type="GlyCosmos" id="P26891">
    <property type="glycosylation" value="1 site, No reported glycans"/>
</dbReference>
<dbReference type="GlyGen" id="P26891">
    <property type="glycosylation" value="1 site"/>
</dbReference>
<dbReference type="PaxDb" id="9823-ENSSSCP00000009697"/>
<dbReference type="Ensembl" id="ENSSSCT00000047936.2">
    <property type="protein sequence ID" value="ENSSSCP00000059176.1"/>
    <property type="gene ID" value="ENSSSCG00000033267.2"/>
</dbReference>
<dbReference type="Ensembl" id="ENSSSCT00060049790.1">
    <property type="protein sequence ID" value="ENSSSCP00060021302.1"/>
    <property type="gene ID" value="ENSSSCG00060036746.1"/>
</dbReference>
<dbReference type="Ensembl" id="ENSSSCT00065049281.1">
    <property type="protein sequence ID" value="ENSSSCP00065021326.1"/>
    <property type="gene ID" value="ENSSSCG00065036141.1"/>
</dbReference>
<dbReference type="Ensembl" id="ENSSSCT00070046371.1">
    <property type="protein sequence ID" value="ENSSSCP00070039119.1"/>
    <property type="gene ID" value="ENSSSCG00070023270.1"/>
</dbReference>
<dbReference type="Ensembl" id="ENSSSCT00070046374.1">
    <property type="protein sequence ID" value="ENSSSCP00070039121.1"/>
    <property type="gene ID" value="ENSSSCG00070023270.1"/>
</dbReference>
<dbReference type="Ensembl" id="ENSSSCT00085004673">
    <property type="protein sequence ID" value="ENSSSCP00085003468"/>
    <property type="gene ID" value="ENSSSCG00085002629"/>
</dbReference>
<dbReference type="Ensembl" id="ENSSSCT00090028653">
    <property type="protein sequence ID" value="ENSSSCP00090017706"/>
    <property type="gene ID" value="ENSSSCG00090016258"/>
</dbReference>
<dbReference type="Ensembl" id="ENSSSCT00105044110">
    <property type="protein sequence ID" value="ENSSSCP00105030754"/>
    <property type="gene ID" value="ENSSSCG00105023190"/>
</dbReference>
<dbReference type="Ensembl" id="ENSSSCT00110061672">
    <property type="protein sequence ID" value="ENSSSCP00110043209"/>
    <property type="gene ID" value="ENSSSCG00110032290"/>
</dbReference>
<dbReference type="Ensembl" id="ENSSSCT00115019494">
    <property type="protein sequence ID" value="ENSSSCP00115018439"/>
    <property type="gene ID" value="ENSSSCG00115011302"/>
</dbReference>
<dbReference type="Ensembl" id="ENSSSCT00130048573">
    <property type="protein sequence ID" value="ENSSSCP00130034236"/>
    <property type="gene ID" value="ENSSSCG00130025089"/>
</dbReference>
<dbReference type="GeneID" id="396868"/>
<dbReference type="KEGG" id="ssc:396868"/>
<dbReference type="CTD" id="3558"/>
<dbReference type="VGNC" id="VGNC:98935">
    <property type="gene designation" value="IL2"/>
</dbReference>
<dbReference type="eggNOG" id="ENOG502RVR5">
    <property type="taxonomic scope" value="Eukaryota"/>
</dbReference>
<dbReference type="GeneTree" id="ENSGT00390000003555"/>
<dbReference type="HOGENOM" id="CLU_124210_0_0_1"/>
<dbReference type="InParanoid" id="P26891"/>
<dbReference type="OMA" id="NGVNNYE"/>
<dbReference type="OrthoDB" id="9450228at2759"/>
<dbReference type="TreeFam" id="TF338200"/>
<dbReference type="Reactome" id="R-SSC-5673001">
    <property type="pathway name" value="RAF/MAP kinase cascade"/>
</dbReference>
<dbReference type="Reactome" id="R-SSC-9020558">
    <property type="pathway name" value="Interleukin-2 signaling"/>
</dbReference>
<dbReference type="Reactome" id="R-SSC-912526">
    <property type="pathway name" value="Interleukin receptor SHC signaling"/>
</dbReference>
<dbReference type="Proteomes" id="UP000008227">
    <property type="component" value="Chromosome 8"/>
</dbReference>
<dbReference type="Proteomes" id="UP000314985">
    <property type="component" value="Chromosome 8"/>
</dbReference>
<dbReference type="Proteomes" id="UP000694570">
    <property type="component" value="Unplaced"/>
</dbReference>
<dbReference type="Proteomes" id="UP000694571">
    <property type="component" value="Unplaced"/>
</dbReference>
<dbReference type="Proteomes" id="UP000694720">
    <property type="component" value="Unplaced"/>
</dbReference>
<dbReference type="Proteomes" id="UP000694722">
    <property type="component" value="Unplaced"/>
</dbReference>
<dbReference type="Proteomes" id="UP000694723">
    <property type="component" value="Unplaced"/>
</dbReference>
<dbReference type="Proteomes" id="UP000694724">
    <property type="component" value="Unplaced"/>
</dbReference>
<dbReference type="Proteomes" id="UP000694725">
    <property type="component" value="Unplaced"/>
</dbReference>
<dbReference type="Proteomes" id="UP000694726">
    <property type="component" value="Unplaced"/>
</dbReference>
<dbReference type="Proteomes" id="UP000694727">
    <property type="component" value="Unplaced"/>
</dbReference>
<dbReference type="Proteomes" id="UP000694728">
    <property type="component" value="Unplaced"/>
</dbReference>
<dbReference type="Bgee" id="ENSSSCG00000033267">
    <property type="expression patterns" value="Expressed in tonsil and 14 other cell types or tissues"/>
</dbReference>
<dbReference type="ExpressionAtlas" id="P26891">
    <property type="expression patterns" value="baseline"/>
</dbReference>
<dbReference type="GO" id="GO:0005615">
    <property type="term" value="C:extracellular space"/>
    <property type="evidence" value="ECO:0000318"/>
    <property type="project" value="GO_Central"/>
</dbReference>
<dbReference type="GO" id="GO:0005125">
    <property type="term" value="F:cytokine activity"/>
    <property type="evidence" value="ECO:0000318"/>
    <property type="project" value="GO_Central"/>
</dbReference>
<dbReference type="GO" id="GO:0008083">
    <property type="term" value="F:growth factor activity"/>
    <property type="evidence" value="ECO:0007669"/>
    <property type="project" value="UniProtKB-KW"/>
</dbReference>
<dbReference type="GO" id="GO:0005134">
    <property type="term" value="F:interleukin-2 receptor binding"/>
    <property type="evidence" value="ECO:0000318"/>
    <property type="project" value="GO_Central"/>
</dbReference>
<dbReference type="GO" id="GO:0050798">
    <property type="term" value="P:activated T cell proliferation"/>
    <property type="evidence" value="ECO:0007669"/>
    <property type="project" value="Ensembl"/>
</dbReference>
<dbReference type="GO" id="GO:0002250">
    <property type="term" value="P:adaptive immune response"/>
    <property type="evidence" value="ECO:0007669"/>
    <property type="project" value="UniProtKB-KW"/>
</dbReference>
<dbReference type="GO" id="GO:0097696">
    <property type="term" value="P:cell surface receptor signaling pathway via STAT"/>
    <property type="evidence" value="ECO:0007669"/>
    <property type="project" value="Ensembl"/>
</dbReference>
<dbReference type="GO" id="GO:0097192">
    <property type="term" value="P:extrinsic apoptotic signaling pathway in absence of ligand"/>
    <property type="evidence" value="ECO:0007669"/>
    <property type="project" value="Ensembl"/>
</dbReference>
<dbReference type="GO" id="GO:0038110">
    <property type="term" value="P:interleukin-2-mediated signaling pathway"/>
    <property type="evidence" value="ECO:0000318"/>
    <property type="project" value="GO_Central"/>
</dbReference>
<dbReference type="GO" id="GO:0002366">
    <property type="term" value="P:leukocyte activation involved in immune response"/>
    <property type="evidence" value="ECO:0007669"/>
    <property type="project" value="Ensembl"/>
</dbReference>
<dbReference type="GO" id="GO:0002903">
    <property type="term" value="P:negative regulation of B cell apoptotic process"/>
    <property type="evidence" value="ECO:0007669"/>
    <property type="project" value="Ensembl"/>
</dbReference>
<dbReference type="GO" id="GO:0050728">
    <property type="term" value="P:negative regulation of inflammatory response"/>
    <property type="evidence" value="ECO:0007669"/>
    <property type="project" value="Ensembl"/>
</dbReference>
<dbReference type="GO" id="GO:0050672">
    <property type="term" value="P:negative regulation of lymphocyte proliferation"/>
    <property type="evidence" value="ECO:0007669"/>
    <property type="project" value="Ensembl"/>
</dbReference>
<dbReference type="GO" id="GO:2000320">
    <property type="term" value="P:negative regulation of T-helper 17 cell differentiation"/>
    <property type="evidence" value="ECO:0007669"/>
    <property type="project" value="Ensembl"/>
</dbReference>
<dbReference type="GO" id="GO:0042104">
    <property type="term" value="P:positive regulation of activated T cell proliferation"/>
    <property type="evidence" value="ECO:0007669"/>
    <property type="project" value="Ensembl"/>
</dbReference>
<dbReference type="GO" id="GO:0030890">
    <property type="term" value="P:positive regulation of B cell proliferation"/>
    <property type="evidence" value="ECO:0007669"/>
    <property type="project" value="Ensembl"/>
</dbReference>
<dbReference type="GO" id="GO:0032740">
    <property type="term" value="P:positive regulation of interleukin-17 production"/>
    <property type="evidence" value="ECO:0007669"/>
    <property type="project" value="Ensembl"/>
</dbReference>
<dbReference type="GO" id="GO:0048304">
    <property type="term" value="P:positive regulation of isotype switching to IgG isotypes"/>
    <property type="evidence" value="ECO:0007669"/>
    <property type="project" value="Ensembl"/>
</dbReference>
<dbReference type="GO" id="GO:1900100">
    <property type="term" value="P:positive regulation of plasma cell differentiation"/>
    <property type="evidence" value="ECO:0007669"/>
    <property type="project" value="Ensembl"/>
</dbReference>
<dbReference type="GO" id="GO:0045944">
    <property type="term" value="P:positive regulation of transcription by RNA polymerase II"/>
    <property type="evidence" value="ECO:0007669"/>
    <property type="project" value="Ensembl"/>
</dbReference>
<dbReference type="GO" id="GO:0032729">
    <property type="term" value="P:positive regulation of type II interferon production"/>
    <property type="evidence" value="ECO:0007669"/>
    <property type="project" value="Ensembl"/>
</dbReference>
<dbReference type="GO" id="GO:2000561">
    <property type="term" value="P:regulation of CD4-positive, alpha-beta T cell proliferation"/>
    <property type="evidence" value="ECO:0007669"/>
    <property type="project" value="Ensembl"/>
</dbReference>
<dbReference type="GO" id="GO:0046013">
    <property type="term" value="P:regulation of T cell homeostatic proliferation"/>
    <property type="evidence" value="ECO:0007669"/>
    <property type="project" value="Ensembl"/>
</dbReference>
<dbReference type="GO" id="GO:0006366">
    <property type="term" value="P:transcription by RNA polymerase II"/>
    <property type="evidence" value="ECO:0007669"/>
    <property type="project" value="Ensembl"/>
</dbReference>
<dbReference type="Gene3D" id="1.20.1250.10">
    <property type="match status" value="1"/>
</dbReference>
<dbReference type="InterPro" id="IPR009079">
    <property type="entry name" value="4_helix_cytokine-like_core"/>
</dbReference>
<dbReference type="InterPro" id="IPR000779">
    <property type="entry name" value="IL-2"/>
</dbReference>
<dbReference type="InterPro" id="IPR030477">
    <property type="entry name" value="IL-2_CS"/>
</dbReference>
<dbReference type="PANTHER" id="PTHR48487">
    <property type="entry name" value="INTERLEUKIN-2"/>
    <property type="match status" value="1"/>
</dbReference>
<dbReference type="PANTHER" id="PTHR48487:SF1">
    <property type="entry name" value="INTERLEUKIN-2"/>
    <property type="match status" value="1"/>
</dbReference>
<dbReference type="Pfam" id="PF00715">
    <property type="entry name" value="IL2"/>
    <property type="match status" value="1"/>
</dbReference>
<dbReference type="PRINTS" id="PR00265">
    <property type="entry name" value="INTERLEUKIN2"/>
</dbReference>
<dbReference type="SMART" id="SM00189">
    <property type="entry name" value="IL2"/>
    <property type="match status" value="1"/>
</dbReference>
<dbReference type="SUPFAM" id="SSF47266">
    <property type="entry name" value="4-helical cytokines"/>
    <property type="match status" value="1"/>
</dbReference>
<dbReference type="PROSITE" id="PS00424">
    <property type="entry name" value="INTERLEUKIN_2"/>
    <property type="match status" value="1"/>
</dbReference>
<name>IL2_PIG</name>
<organism>
    <name type="scientific">Sus scrofa</name>
    <name type="common">Pig</name>
    <dbReference type="NCBI Taxonomy" id="9823"/>
    <lineage>
        <taxon>Eukaryota</taxon>
        <taxon>Metazoa</taxon>
        <taxon>Chordata</taxon>
        <taxon>Craniata</taxon>
        <taxon>Vertebrata</taxon>
        <taxon>Euteleostomi</taxon>
        <taxon>Mammalia</taxon>
        <taxon>Eutheria</taxon>
        <taxon>Laurasiatheria</taxon>
        <taxon>Artiodactyla</taxon>
        <taxon>Suina</taxon>
        <taxon>Suidae</taxon>
        <taxon>Sus</taxon>
    </lineage>
</organism>
<gene>
    <name type="primary">IL2</name>
</gene>
<sequence>MYKMQLLCCIALTLALMANGAPTSSSTKNTKKQLEPLLLDLQLLLKEVKNYENADLSRMLTFKFYMPKQATELKHLQCLVEELKALEGVLNLGQSKNSDSANIKESMNNINVTVLELKGSETSFKCEYDDETVTAVEFLNKWITFCQSIYSTLT</sequence>
<feature type="signal peptide" evidence="1">
    <location>
        <begin position="1"/>
        <end position="20"/>
    </location>
</feature>
<feature type="chain" id="PRO_0000015498" description="Interleukin-2">
    <location>
        <begin position="21"/>
        <end position="154"/>
    </location>
</feature>
<feature type="glycosylation site" description="O-linked (GalNAc...) threonine" evidence="1">
    <location>
        <position position="23"/>
    </location>
</feature>
<feature type="disulfide bond" evidence="1">
    <location>
        <begin position="78"/>
        <end position="126"/>
    </location>
</feature>
<protein>
    <recommendedName>
        <fullName>Interleukin-2</fullName>
        <shortName>IL-2</shortName>
    </recommendedName>
    <alternativeName>
        <fullName>T-cell growth factor</fullName>
        <shortName>TCGF</shortName>
    </alternativeName>
</protein>
<evidence type="ECO:0000250" key="1"/>
<evidence type="ECO:0000250" key="2">
    <source>
        <dbReference type="UniProtKB" id="P60568"/>
    </source>
</evidence>
<evidence type="ECO:0000305" key="3"/>
<comment type="function">
    <text evidence="2">Cytokine produced by activated CD4-positive helper T-cells and to a lesser extend activated CD8-positive T-cells and natural killer (NK) cells that plays pivotal roles in the immune response and tolerance. Binds to a receptor complex composed of either the high-affinity trimeric IL-2R (IL2RA/CD25, IL2RB/CD122 and IL2RG/CD132) or the low-affinity dimeric IL-2R (IL2RB and IL2RG). Interaction with the receptor leads to oligomerization and conformation changes in the IL-2R subunits resulting in downstream signaling starting with phosphorylation of JAK1 and JAK3. In turn, JAK1 and JAK3 phosphorylate the receptor to form a docking site leading to the phosphorylation of several substrates including STAT5. This process leads to activation of several pathways including STAT, phosphoinositide-3-kinase/PI3K and mitogen-activated protein kinase/MAPK pathways. Functions as a T-cell growth factor and can increase NK-cell cytolytic activity as well. Promotes strong proliferation of activated B-cells and subsequently immunoglobulin production. Plays a pivotal role in regulating the adaptive immune system by controlling the survival and proliferation of regulatory T-cells, which are required for the maintenance of immune tolerance. Moreover, participates in the differentiation and homeostasis of effector T-cell subsets, including Th1, Th2, Th17 as well as memory CD8-positive T-cells.</text>
</comment>
<comment type="subcellular location">
    <subcellularLocation>
        <location>Secreted</location>
    </subcellularLocation>
</comment>
<comment type="similarity">
    <text evidence="3">Belongs to the IL-2 family.</text>
</comment>
<keyword id="KW-1064">Adaptive immunity</keyword>
<keyword id="KW-0202">Cytokine</keyword>
<keyword id="KW-1015">Disulfide bond</keyword>
<keyword id="KW-0325">Glycoprotein</keyword>
<keyword id="KW-0339">Growth factor</keyword>
<keyword id="KW-0391">Immunity</keyword>
<keyword id="KW-1185">Reference proteome</keyword>
<keyword id="KW-0964">Secreted</keyword>
<keyword id="KW-0732">Signal</keyword>
<accession>P26891</accession>
<reference key="1">
    <citation type="journal article" date="1991" name="Biochim. Biophys. Acta">
        <title>cDNA cloning of porcine interleukin 2 by polymerase chain reaction.</title>
        <authorList>
            <person name="Goodall J.C."/>
            <person name="Emery D.C."/>
            <person name="Bailey M."/>
            <person name="English L.S."/>
            <person name="Hall L."/>
        </authorList>
    </citation>
    <scope>NUCLEOTIDE SEQUENCE [MRNA]</scope>
    <source>
        <tissue>T-cell</tissue>
    </source>
</reference>
<reference key="2">
    <citation type="submission" date="1991-05" db="EMBL/GenBank/DDBJ databases">
        <authorList>
            <person name="Lefevre F."/>
        </authorList>
    </citation>
    <scope>NUCLEOTIDE SEQUENCE [MRNA]</scope>
    <source>
        <tissue>T-cell</tissue>
    </source>
</reference>
<reference key="3">
    <citation type="submission" date="2000-04" db="EMBL/GenBank/DDBJ databases">
        <title>Structure of the porcine chromosomal interleukin-2 gene.</title>
        <authorList>
            <person name="Iwata H."/>
            <person name="Hasegawa A."/>
            <person name="Yamamoto M."/>
            <person name="Oida T."/>
            <person name="Endo Y."/>
            <person name="Inoue T."/>
        </authorList>
    </citation>
    <scope>NUCLEOTIDE SEQUENCE [GENOMIC DNA]</scope>
</reference>
<reference key="4">
    <citation type="submission" date="2003-05" db="EMBL/GenBank/DDBJ databases">
        <authorList>
            <person name="Gao R."/>
            <person name="Li H."/>
            <person name="Wang L."/>
            <person name="Wu M."/>
            <person name="Liu S."/>
        </authorList>
    </citation>
    <scope>NUCLEOTIDE SEQUENCE [MRNA]</scope>
    <source>
        <tissue>Blood</tissue>
    </source>
</reference>